<sequence length="137" mass="15218">MKLNLYVLTPKRIIWDCEVKEIILSTNSGQIGVLPNHAPINTAVDMGPLRIRLLNDQWLTAVLWSGFARIVNNEIIILGNDAELGSDIDPEEAQQALEIAEANLSKAEGTKELVEAKLALRRARIRVEAVNWIPPSN</sequence>
<geneLocation type="chloroplast"/>
<comment type="function">
    <text evidence="1">Produces ATP from ADP in the presence of a proton gradient across the membrane.</text>
</comment>
<comment type="subunit">
    <text evidence="1">F-type ATPases have 2 components, CF(1) - the catalytic core - and CF(0) - the membrane proton channel. CF(1) has five subunits: alpha(3), beta(3), gamma(1), delta(1), epsilon(1). CF(0) has three main subunits: a, b and c.</text>
</comment>
<comment type="subcellular location">
    <subcellularLocation>
        <location evidence="1">Plastid</location>
        <location evidence="1">Chloroplast thylakoid membrane</location>
        <topology evidence="1">Peripheral membrane protein</topology>
    </subcellularLocation>
</comment>
<comment type="similarity">
    <text evidence="1">Belongs to the ATPase epsilon chain family.</text>
</comment>
<protein>
    <recommendedName>
        <fullName evidence="1">ATP synthase epsilon chain, chloroplastic</fullName>
    </recommendedName>
    <alternativeName>
        <fullName evidence="1">ATP synthase F1 sector epsilon subunit</fullName>
    </alternativeName>
    <alternativeName>
        <fullName evidence="1">F-ATPase epsilon subunit</fullName>
    </alternativeName>
</protein>
<accession>P00835</accession>
<keyword id="KW-0066">ATP synthesis</keyword>
<keyword id="KW-0139">CF(1)</keyword>
<keyword id="KW-0150">Chloroplast</keyword>
<keyword id="KW-0375">Hydrogen ion transport</keyword>
<keyword id="KW-0406">Ion transport</keyword>
<keyword id="KW-0472">Membrane</keyword>
<keyword id="KW-0934">Plastid</keyword>
<keyword id="KW-1185">Reference proteome</keyword>
<keyword id="KW-0793">Thylakoid</keyword>
<keyword id="KW-0813">Transport</keyword>
<organism>
    <name type="scientific">Zea mays</name>
    <name type="common">Maize</name>
    <dbReference type="NCBI Taxonomy" id="4577"/>
    <lineage>
        <taxon>Eukaryota</taxon>
        <taxon>Viridiplantae</taxon>
        <taxon>Streptophyta</taxon>
        <taxon>Embryophyta</taxon>
        <taxon>Tracheophyta</taxon>
        <taxon>Spermatophyta</taxon>
        <taxon>Magnoliopsida</taxon>
        <taxon>Liliopsida</taxon>
        <taxon>Poales</taxon>
        <taxon>Poaceae</taxon>
        <taxon>PACMAD clade</taxon>
        <taxon>Panicoideae</taxon>
        <taxon>Andropogonodae</taxon>
        <taxon>Andropogoneae</taxon>
        <taxon>Tripsacinae</taxon>
        <taxon>Zea</taxon>
    </lineage>
</organism>
<proteinExistence type="inferred from homology"/>
<gene>
    <name evidence="1" type="primary">atpE</name>
</gene>
<reference key="1">
    <citation type="journal article" date="1982" name="Nucleic Acids Res.">
        <title>The maize chloroplast genes for the beta and epsilon subunits of the photosynthetic coupling factor CF1 are fused.</title>
        <authorList>
            <person name="Krebbers E.T."/>
            <person name="Larrinua I.M."/>
            <person name="McIntosh L."/>
            <person name="Bogorad L."/>
        </authorList>
    </citation>
    <scope>NUCLEOTIDE SEQUENCE [GENOMIC DNA]</scope>
</reference>
<reference key="2">
    <citation type="journal article" date="1995" name="J. Mol. Biol.">
        <title>Complete sequence of the maize chloroplast genome: gene content, hotspots of divergence and fine tuning of genetic information by transcript editing.</title>
        <authorList>
            <person name="Maier R.M."/>
            <person name="Neckermann K."/>
            <person name="Igloi G.L."/>
            <person name="Koessel H."/>
        </authorList>
    </citation>
    <scope>NUCLEOTIDE SEQUENCE [LARGE SCALE GENOMIC DNA]</scope>
    <source>
        <strain>cv. B73</strain>
    </source>
</reference>
<dbReference type="EMBL" id="J01421">
    <property type="protein sequence ID" value="AAA85357.1"/>
    <property type="molecule type" value="Genomic_DNA"/>
</dbReference>
<dbReference type="EMBL" id="X86563">
    <property type="protein sequence ID" value="CAA60292.1"/>
    <property type="molecule type" value="Genomic_DNA"/>
</dbReference>
<dbReference type="PIR" id="A01036">
    <property type="entry name" value="PWZME"/>
</dbReference>
<dbReference type="RefSeq" id="NP_043031.1">
    <property type="nucleotide sequence ID" value="NC_001666.2"/>
</dbReference>
<dbReference type="SMR" id="P00835"/>
<dbReference type="FunCoup" id="P00835">
    <property type="interactions" value="443"/>
</dbReference>
<dbReference type="STRING" id="4577.P00835"/>
<dbReference type="EnsemblPlants" id="Zm00001eb039130_T001">
    <property type="protein sequence ID" value="Zm00001eb039130_P001"/>
    <property type="gene ID" value="Zm00001eb039130"/>
</dbReference>
<dbReference type="EnsemblPlants" id="Zm00001eb435040_T001">
    <property type="protein sequence ID" value="Zm00001eb435040_P001"/>
    <property type="gene ID" value="Zm00001eb435040"/>
</dbReference>
<dbReference type="EnsemblPlants" id="Zm00001eb435200_T001">
    <property type="protein sequence ID" value="Zm00001eb435200_P001"/>
    <property type="gene ID" value="Zm00001eb435200"/>
</dbReference>
<dbReference type="EnsemblPlants" id="Zm00001eb435400_T001">
    <property type="protein sequence ID" value="Zm00001eb435400_P001"/>
    <property type="gene ID" value="Zm00001eb435400"/>
</dbReference>
<dbReference type="EnsemblPlants" id="Zm00001eb435660_T001">
    <property type="protein sequence ID" value="Zm00001eb435660_P001"/>
    <property type="gene ID" value="Zm00001eb435660"/>
</dbReference>
<dbReference type="GeneID" id="845171"/>
<dbReference type="Gramene" id="Zm00001eb039130_T001">
    <property type="protein sequence ID" value="Zm00001eb039130_P001"/>
    <property type="gene ID" value="Zm00001eb039130"/>
</dbReference>
<dbReference type="Gramene" id="Zm00001eb435040_T001">
    <property type="protein sequence ID" value="Zm00001eb435040_P001"/>
    <property type="gene ID" value="Zm00001eb435040"/>
</dbReference>
<dbReference type="Gramene" id="Zm00001eb435200_T001">
    <property type="protein sequence ID" value="Zm00001eb435200_P001"/>
    <property type="gene ID" value="Zm00001eb435200"/>
</dbReference>
<dbReference type="Gramene" id="Zm00001eb435400_T001">
    <property type="protein sequence ID" value="Zm00001eb435400_P001"/>
    <property type="gene ID" value="Zm00001eb435400"/>
</dbReference>
<dbReference type="Gramene" id="Zm00001eb435660_T001">
    <property type="protein sequence ID" value="Zm00001eb435660_P001"/>
    <property type="gene ID" value="Zm00001eb435660"/>
</dbReference>
<dbReference type="KEGG" id="zma:845171"/>
<dbReference type="MaizeGDB" id="69211"/>
<dbReference type="InParanoid" id="P00835"/>
<dbReference type="OrthoDB" id="681737at2759"/>
<dbReference type="Proteomes" id="UP000007305">
    <property type="component" value="Chloroplast"/>
</dbReference>
<dbReference type="ExpressionAtlas" id="P00835">
    <property type="expression patterns" value="baseline"/>
</dbReference>
<dbReference type="GO" id="GO:0009535">
    <property type="term" value="C:chloroplast thylakoid membrane"/>
    <property type="evidence" value="ECO:0007669"/>
    <property type="project" value="UniProtKB-SubCell"/>
</dbReference>
<dbReference type="GO" id="GO:0045259">
    <property type="term" value="C:proton-transporting ATP synthase complex"/>
    <property type="evidence" value="ECO:0007669"/>
    <property type="project" value="UniProtKB-KW"/>
</dbReference>
<dbReference type="GO" id="GO:0005524">
    <property type="term" value="F:ATP binding"/>
    <property type="evidence" value="ECO:0007669"/>
    <property type="project" value="UniProtKB-UniRule"/>
</dbReference>
<dbReference type="GO" id="GO:0046933">
    <property type="term" value="F:proton-transporting ATP synthase activity, rotational mechanism"/>
    <property type="evidence" value="ECO:0007669"/>
    <property type="project" value="UniProtKB-UniRule"/>
</dbReference>
<dbReference type="GO" id="GO:0015986">
    <property type="term" value="P:proton motive force-driven ATP synthesis"/>
    <property type="evidence" value="ECO:0000318"/>
    <property type="project" value="GO_Central"/>
</dbReference>
<dbReference type="CDD" id="cd12152">
    <property type="entry name" value="F1-ATPase_delta"/>
    <property type="match status" value="1"/>
</dbReference>
<dbReference type="FunFam" id="2.60.15.10:FF:000002">
    <property type="entry name" value="ATP synthase epsilon chain, chloroplastic"/>
    <property type="match status" value="1"/>
</dbReference>
<dbReference type="Gene3D" id="6.10.140.480">
    <property type="match status" value="1"/>
</dbReference>
<dbReference type="Gene3D" id="2.60.15.10">
    <property type="entry name" value="F0F1 ATP synthase delta/epsilon subunit, N-terminal"/>
    <property type="match status" value="1"/>
</dbReference>
<dbReference type="HAMAP" id="MF_00530">
    <property type="entry name" value="ATP_synth_epsil_bac"/>
    <property type="match status" value="1"/>
</dbReference>
<dbReference type="InterPro" id="IPR001469">
    <property type="entry name" value="ATP_synth_F1_dsu/esu"/>
</dbReference>
<dbReference type="InterPro" id="IPR020546">
    <property type="entry name" value="ATP_synth_F1_dsu/esu_N"/>
</dbReference>
<dbReference type="InterPro" id="IPR020547">
    <property type="entry name" value="ATP_synth_F1_esu_C"/>
</dbReference>
<dbReference type="InterPro" id="IPR036771">
    <property type="entry name" value="ATPsynth_dsu/esu_N"/>
</dbReference>
<dbReference type="NCBIfam" id="TIGR01216">
    <property type="entry name" value="ATP_synt_epsi"/>
    <property type="match status" value="1"/>
</dbReference>
<dbReference type="PANTHER" id="PTHR13822">
    <property type="entry name" value="ATP SYNTHASE DELTA/EPSILON CHAIN"/>
    <property type="match status" value="1"/>
</dbReference>
<dbReference type="PANTHER" id="PTHR13822:SF10">
    <property type="entry name" value="ATP SYNTHASE EPSILON CHAIN, CHLOROPLASTIC"/>
    <property type="match status" value="1"/>
</dbReference>
<dbReference type="Pfam" id="PF00401">
    <property type="entry name" value="ATP-synt_DE"/>
    <property type="match status" value="1"/>
</dbReference>
<dbReference type="Pfam" id="PF02823">
    <property type="entry name" value="ATP-synt_DE_N"/>
    <property type="match status" value="1"/>
</dbReference>
<dbReference type="SUPFAM" id="SSF51344">
    <property type="entry name" value="Epsilon subunit of F1F0-ATP synthase N-terminal domain"/>
    <property type="match status" value="1"/>
</dbReference>
<feature type="chain" id="PRO_0000188272" description="ATP synthase epsilon chain, chloroplastic">
    <location>
        <begin position="1"/>
        <end position="137"/>
    </location>
</feature>
<name>ATPE_MAIZE</name>
<evidence type="ECO:0000255" key="1">
    <source>
        <dbReference type="HAMAP-Rule" id="MF_00530"/>
    </source>
</evidence>